<feature type="chain" id="PRO_0000119409" description="GTP cyclohydrolase 1">
    <location>
        <begin position="1"/>
        <end position="214"/>
    </location>
</feature>
<feature type="binding site" evidence="2">
    <location>
        <position position="101"/>
    </location>
    <ligand>
        <name>Zn(2+)</name>
        <dbReference type="ChEBI" id="CHEBI:29105"/>
    </ligand>
</feature>
<feature type="binding site" evidence="2">
    <location>
        <position position="104"/>
    </location>
    <ligand>
        <name>Zn(2+)</name>
        <dbReference type="ChEBI" id="CHEBI:29105"/>
    </ligand>
</feature>
<feature type="binding site" evidence="2">
    <location>
        <position position="172"/>
    </location>
    <ligand>
        <name>Zn(2+)</name>
        <dbReference type="ChEBI" id="CHEBI:29105"/>
    </ligand>
</feature>
<accession>Q7NK98</accession>
<protein>
    <recommendedName>
        <fullName evidence="2">GTP cyclohydrolase 1</fullName>
        <ecNumber evidence="2">3.5.4.16</ecNumber>
    </recommendedName>
    <alternativeName>
        <fullName evidence="2">GTP cyclohydrolase I</fullName>
        <shortName evidence="2">GTP-CH-I</shortName>
    </alternativeName>
</protein>
<name>GCH1_GLOVI</name>
<comment type="catalytic activity">
    <reaction evidence="2">
        <text>GTP + H2O = 7,8-dihydroneopterin 3'-triphosphate + formate + H(+)</text>
        <dbReference type="Rhea" id="RHEA:17473"/>
        <dbReference type="ChEBI" id="CHEBI:15377"/>
        <dbReference type="ChEBI" id="CHEBI:15378"/>
        <dbReference type="ChEBI" id="CHEBI:15740"/>
        <dbReference type="ChEBI" id="CHEBI:37565"/>
        <dbReference type="ChEBI" id="CHEBI:58462"/>
        <dbReference type="EC" id="3.5.4.16"/>
    </reaction>
</comment>
<comment type="pathway">
    <text evidence="2">Cofactor biosynthesis; 7,8-dihydroneopterin triphosphate biosynthesis; 7,8-dihydroneopterin triphosphate from GTP: step 1/1.</text>
</comment>
<comment type="subunit">
    <text evidence="1">Toroid-shaped homodecamer, composed of two pentamers of five dimers.</text>
</comment>
<comment type="similarity">
    <text evidence="2">Belongs to the GTP cyclohydrolase I family.</text>
</comment>
<keyword id="KW-0342">GTP-binding</keyword>
<keyword id="KW-0378">Hydrolase</keyword>
<keyword id="KW-0479">Metal-binding</keyword>
<keyword id="KW-0547">Nucleotide-binding</keyword>
<keyword id="KW-0554">One-carbon metabolism</keyword>
<keyword id="KW-1185">Reference proteome</keyword>
<keyword id="KW-0862">Zinc</keyword>
<reference key="1">
    <citation type="journal article" date="2003" name="DNA Res.">
        <title>Complete genome structure of Gloeobacter violaceus PCC 7421, a cyanobacterium that lacks thylakoids.</title>
        <authorList>
            <person name="Nakamura Y."/>
            <person name="Kaneko T."/>
            <person name="Sato S."/>
            <person name="Mimuro M."/>
            <person name="Miyashita H."/>
            <person name="Tsuchiya T."/>
            <person name="Sasamoto S."/>
            <person name="Watanabe A."/>
            <person name="Kawashima K."/>
            <person name="Kishida Y."/>
            <person name="Kiyokawa C."/>
            <person name="Kohara M."/>
            <person name="Matsumoto M."/>
            <person name="Matsuno A."/>
            <person name="Nakazaki N."/>
            <person name="Shimpo S."/>
            <person name="Takeuchi C."/>
            <person name="Yamada M."/>
            <person name="Tabata S."/>
        </authorList>
    </citation>
    <scope>NUCLEOTIDE SEQUENCE [LARGE SCALE GENOMIC DNA]</scope>
    <source>
        <strain>ATCC 29082 / PCC 7421</strain>
    </source>
</reference>
<dbReference type="EC" id="3.5.4.16" evidence="2"/>
<dbReference type="EMBL" id="BA000045">
    <property type="protein sequence ID" value="BAC89521.1"/>
    <property type="molecule type" value="Genomic_DNA"/>
</dbReference>
<dbReference type="RefSeq" id="NP_924526.1">
    <property type="nucleotide sequence ID" value="NC_005125.1"/>
</dbReference>
<dbReference type="RefSeq" id="WP_011141579.1">
    <property type="nucleotide sequence ID" value="NC_005125.1"/>
</dbReference>
<dbReference type="SMR" id="Q7NK98"/>
<dbReference type="FunCoup" id="Q7NK98">
    <property type="interactions" value="173"/>
</dbReference>
<dbReference type="STRING" id="251221.gene:10759069"/>
<dbReference type="EnsemblBacteria" id="BAC89521">
    <property type="protein sequence ID" value="BAC89521"/>
    <property type="gene ID" value="BAC89521"/>
</dbReference>
<dbReference type="KEGG" id="gvi:gll1580"/>
<dbReference type="PATRIC" id="fig|251221.4.peg.1617"/>
<dbReference type="eggNOG" id="COG0302">
    <property type="taxonomic scope" value="Bacteria"/>
</dbReference>
<dbReference type="HOGENOM" id="CLU_049768_2_2_3"/>
<dbReference type="InParanoid" id="Q7NK98"/>
<dbReference type="OrthoDB" id="9801207at2"/>
<dbReference type="PhylomeDB" id="Q7NK98"/>
<dbReference type="UniPathway" id="UPA00848">
    <property type="reaction ID" value="UER00151"/>
</dbReference>
<dbReference type="Proteomes" id="UP000000557">
    <property type="component" value="Chromosome"/>
</dbReference>
<dbReference type="GO" id="GO:0005737">
    <property type="term" value="C:cytoplasm"/>
    <property type="evidence" value="ECO:0000318"/>
    <property type="project" value="GO_Central"/>
</dbReference>
<dbReference type="GO" id="GO:0005525">
    <property type="term" value="F:GTP binding"/>
    <property type="evidence" value="ECO:0000318"/>
    <property type="project" value="GO_Central"/>
</dbReference>
<dbReference type="GO" id="GO:0003934">
    <property type="term" value="F:GTP cyclohydrolase I activity"/>
    <property type="evidence" value="ECO:0000318"/>
    <property type="project" value="GO_Central"/>
</dbReference>
<dbReference type="GO" id="GO:0008270">
    <property type="term" value="F:zinc ion binding"/>
    <property type="evidence" value="ECO:0000318"/>
    <property type="project" value="GO_Central"/>
</dbReference>
<dbReference type="GO" id="GO:0006730">
    <property type="term" value="P:one-carbon metabolic process"/>
    <property type="evidence" value="ECO:0007669"/>
    <property type="project" value="UniProtKB-UniRule"/>
</dbReference>
<dbReference type="GO" id="GO:0006729">
    <property type="term" value="P:tetrahydrobiopterin biosynthetic process"/>
    <property type="evidence" value="ECO:0000318"/>
    <property type="project" value="GO_Central"/>
</dbReference>
<dbReference type="GO" id="GO:0046654">
    <property type="term" value="P:tetrahydrofolate biosynthetic process"/>
    <property type="evidence" value="ECO:0007669"/>
    <property type="project" value="UniProtKB-UniRule"/>
</dbReference>
<dbReference type="CDD" id="cd00642">
    <property type="entry name" value="GTP_cyclohydro1"/>
    <property type="match status" value="1"/>
</dbReference>
<dbReference type="FunFam" id="3.30.1130.10:FF:000012">
    <property type="entry name" value="GTP cyclohydrolase 1"/>
    <property type="match status" value="1"/>
</dbReference>
<dbReference type="Gene3D" id="1.10.286.10">
    <property type="match status" value="1"/>
</dbReference>
<dbReference type="Gene3D" id="3.30.1130.10">
    <property type="match status" value="1"/>
</dbReference>
<dbReference type="HAMAP" id="MF_00223">
    <property type="entry name" value="FolE"/>
    <property type="match status" value="1"/>
</dbReference>
<dbReference type="InterPro" id="IPR043133">
    <property type="entry name" value="GTP-CH-I_C/QueF"/>
</dbReference>
<dbReference type="InterPro" id="IPR043134">
    <property type="entry name" value="GTP-CH-I_N"/>
</dbReference>
<dbReference type="InterPro" id="IPR001474">
    <property type="entry name" value="GTP_CycHdrlase_I"/>
</dbReference>
<dbReference type="InterPro" id="IPR018234">
    <property type="entry name" value="GTP_CycHdrlase_I_CS"/>
</dbReference>
<dbReference type="InterPro" id="IPR020602">
    <property type="entry name" value="GTP_CycHdrlase_I_dom"/>
</dbReference>
<dbReference type="NCBIfam" id="TIGR00063">
    <property type="entry name" value="folE"/>
    <property type="match status" value="1"/>
</dbReference>
<dbReference type="NCBIfam" id="NF006825">
    <property type="entry name" value="PRK09347.1-2"/>
    <property type="match status" value="1"/>
</dbReference>
<dbReference type="NCBIfam" id="NF006826">
    <property type="entry name" value="PRK09347.1-3"/>
    <property type="match status" value="1"/>
</dbReference>
<dbReference type="PANTHER" id="PTHR11109:SF7">
    <property type="entry name" value="GTP CYCLOHYDROLASE 1"/>
    <property type="match status" value="1"/>
</dbReference>
<dbReference type="PANTHER" id="PTHR11109">
    <property type="entry name" value="GTP CYCLOHYDROLASE I"/>
    <property type="match status" value="1"/>
</dbReference>
<dbReference type="Pfam" id="PF01227">
    <property type="entry name" value="GTP_cyclohydroI"/>
    <property type="match status" value="1"/>
</dbReference>
<dbReference type="SUPFAM" id="SSF55620">
    <property type="entry name" value="Tetrahydrobiopterin biosynthesis enzymes-like"/>
    <property type="match status" value="1"/>
</dbReference>
<dbReference type="PROSITE" id="PS00859">
    <property type="entry name" value="GTP_CYCLOHYDROL_1_1"/>
    <property type="match status" value="1"/>
</dbReference>
<dbReference type="PROSITE" id="PS00860">
    <property type="entry name" value="GTP_CYCLOHYDROL_1_2"/>
    <property type="match status" value="1"/>
</dbReference>
<evidence type="ECO:0000250" key="1"/>
<evidence type="ECO:0000255" key="2">
    <source>
        <dbReference type="HAMAP-Rule" id="MF_00223"/>
    </source>
</evidence>
<gene>
    <name evidence="2" type="primary">folE</name>
    <name type="ordered locus">gll1580</name>
</gene>
<organism>
    <name type="scientific">Gloeobacter violaceus (strain ATCC 29082 / PCC 7421)</name>
    <dbReference type="NCBI Taxonomy" id="251221"/>
    <lineage>
        <taxon>Bacteria</taxon>
        <taxon>Bacillati</taxon>
        <taxon>Cyanobacteriota</taxon>
        <taxon>Cyanophyceae</taxon>
        <taxon>Gloeobacterales</taxon>
        <taxon>Gloeobacteraceae</taxon>
        <taxon>Gloeobacter</taxon>
    </lineage>
</organism>
<proteinExistence type="inferred from homology"/>
<sequence>MTIAHKDFLPSDWHEDDSASEAASRNGLDPMMDAVRTLLVGVGEDPERNGLERTPKRVAEALKFLTKGYGQSLEELLNGAIFDLGHDELVLVRDIDLFSMCEHHMLPFIGRAHVGYIPDQKVVGLSKLARIVEMYARRLQVQERLTRQIAEALQEVLQPRGVAVVIEASHMCMVMRGVQKPNSWTVTSSMVGVFKESQSTRQEFLDLIHHKATF</sequence>